<dbReference type="EMBL" id="AE017282">
    <property type="protein sequence ID" value="AAU91289.1"/>
    <property type="molecule type" value="Genomic_DNA"/>
</dbReference>
<dbReference type="PIR" id="A23321">
    <property type="entry name" value="CCMP55"/>
</dbReference>
<dbReference type="RefSeq" id="WP_010961831.1">
    <property type="nucleotide sequence ID" value="NC_002977.6"/>
</dbReference>
<dbReference type="SMR" id="P04369"/>
<dbReference type="STRING" id="243233.MCA2618"/>
<dbReference type="GeneID" id="88224800"/>
<dbReference type="KEGG" id="mca:MCA2618"/>
<dbReference type="eggNOG" id="COG2010">
    <property type="taxonomic scope" value="Bacteria"/>
</dbReference>
<dbReference type="HOGENOM" id="CLU_2012574_0_0_6"/>
<dbReference type="Proteomes" id="UP000006821">
    <property type="component" value="Chromosome"/>
</dbReference>
<dbReference type="GO" id="GO:0009055">
    <property type="term" value="F:electron transfer activity"/>
    <property type="evidence" value="ECO:0007669"/>
    <property type="project" value="InterPro"/>
</dbReference>
<dbReference type="GO" id="GO:0020037">
    <property type="term" value="F:heme binding"/>
    <property type="evidence" value="ECO:0007669"/>
    <property type="project" value="InterPro"/>
</dbReference>
<dbReference type="GO" id="GO:0046872">
    <property type="term" value="F:metal ion binding"/>
    <property type="evidence" value="ECO:0007669"/>
    <property type="project" value="UniProtKB-KW"/>
</dbReference>
<dbReference type="Gene3D" id="1.10.760.10">
    <property type="entry name" value="Cytochrome c-like domain"/>
    <property type="match status" value="1"/>
</dbReference>
<dbReference type="InterPro" id="IPR009056">
    <property type="entry name" value="Cyt_c-like_dom"/>
</dbReference>
<dbReference type="InterPro" id="IPR036909">
    <property type="entry name" value="Cyt_c-like_dom_sf"/>
</dbReference>
<dbReference type="InterPro" id="IPR051811">
    <property type="entry name" value="Cytochrome_c550/c551-like"/>
</dbReference>
<dbReference type="PANTHER" id="PTHR37823">
    <property type="entry name" value="CYTOCHROME C-553-LIKE"/>
    <property type="match status" value="1"/>
</dbReference>
<dbReference type="PANTHER" id="PTHR37823:SF4">
    <property type="entry name" value="MENAQUINOL-CYTOCHROME C REDUCTASE CYTOCHROME B_C SUBUNIT"/>
    <property type="match status" value="1"/>
</dbReference>
<dbReference type="Pfam" id="PF13442">
    <property type="entry name" value="Cytochrome_CBB3"/>
    <property type="match status" value="1"/>
</dbReference>
<dbReference type="SUPFAM" id="SSF46626">
    <property type="entry name" value="Cytochrome c"/>
    <property type="match status" value="1"/>
</dbReference>
<dbReference type="PROSITE" id="PS51007">
    <property type="entry name" value="CYTC"/>
    <property type="match status" value="1"/>
</dbReference>
<keyword id="KW-0903">Direct protein sequencing</keyword>
<keyword id="KW-0249">Electron transport</keyword>
<keyword id="KW-0349">Heme</keyword>
<keyword id="KW-0408">Iron</keyword>
<keyword id="KW-0479">Metal-binding</keyword>
<keyword id="KW-1185">Reference proteome</keyword>
<keyword id="KW-0732">Signal</keyword>
<keyword id="KW-0813">Transport</keyword>
<feature type="signal peptide" evidence="2 3">
    <location>
        <begin position="1"/>
        <end position="27"/>
    </location>
</feature>
<feature type="chain" id="PRO_0000006546" description="Cytochrome c-555">
    <location>
        <begin position="28"/>
        <end position="123"/>
    </location>
</feature>
<feature type="binding site" description="covalent" evidence="1 3">
    <location>
        <position position="46"/>
    </location>
    <ligand>
        <name>heme c</name>
        <dbReference type="ChEBI" id="CHEBI:61717"/>
    </ligand>
</feature>
<feature type="binding site" description="covalent" evidence="1 3">
    <location>
        <position position="49"/>
    </location>
    <ligand>
        <name>heme c</name>
        <dbReference type="ChEBI" id="CHEBI:61717"/>
    </ligand>
</feature>
<feature type="binding site" description="axial binding residue">
    <location>
        <position position="50"/>
    </location>
    <ligand>
        <name>heme c</name>
        <dbReference type="ChEBI" id="CHEBI:61717"/>
    </ligand>
    <ligandPart>
        <name>Fe</name>
        <dbReference type="ChEBI" id="CHEBI:18248"/>
    </ligandPart>
</feature>
<feature type="binding site" description="axial binding residue">
    <location>
        <position position="86"/>
    </location>
    <ligand>
        <name>heme c</name>
        <dbReference type="ChEBI" id="CHEBI:61717"/>
    </ligand>
    <ligandPart>
        <name>Fe</name>
        <dbReference type="ChEBI" id="CHEBI:18248"/>
    </ligandPart>
</feature>
<organism>
    <name type="scientific">Methylococcus capsulatus (strain ATCC 33009 / NCIMB 11132 / Bath)</name>
    <dbReference type="NCBI Taxonomy" id="243233"/>
    <lineage>
        <taxon>Bacteria</taxon>
        <taxon>Pseudomonadati</taxon>
        <taxon>Pseudomonadota</taxon>
        <taxon>Gammaproteobacteria</taxon>
        <taxon>Methylococcales</taxon>
        <taxon>Methylococcaceae</taxon>
        <taxon>Methylococcus</taxon>
    </lineage>
</organism>
<proteinExistence type="evidence at protein level"/>
<gene>
    <name type="ordered locus">MCA2618</name>
</gene>
<comment type="PTM">
    <text>Binds 1 heme c group covalently per subunit.</text>
</comment>
<comment type="mass spectrometry"/>
<protein>
    <recommendedName>
        <fullName>Cytochrome c-555</fullName>
    </recommendedName>
    <alternativeName>
        <fullName>Cytochrome c555</fullName>
    </alternativeName>
</protein>
<sequence>MDHKKTSIRTTALAALVLGAVAAPAFSAPVDQATYNGFKIYKQQRCETCHGATGEGSAAFPNLLNSLKNLSKDQFKEVVLKGRNAMPPFEANKKVAEGIDDLYTYIKGRSDGTVPAGELEKPQ</sequence>
<reference key="1">
    <citation type="journal article" date="2004" name="PLoS Biol.">
        <title>Genomic insights into methanotrophy: the complete genome sequence of Methylococcus capsulatus (Bath).</title>
        <authorList>
            <person name="Ward N.L."/>
            <person name="Larsen O."/>
            <person name="Sakwa J."/>
            <person name="Bruseth L."/>
            <person name="Khouri H.M."/>
            <person name="Durkin A.S."/>
            <person name="Dimitrov G."/>
            <person name="Jiang L."/>
            <person name="Scanlan D."/>
            <person name="Kang K.H."/>
            <person name="Lewis M.R."/>
            <person name="Nelson K.E."/>
            <person name="Methe B.A."/>
            <person name="Wu M."/>
            <person name="Heidelberg J.F."/>
            <person name="Paulsen I.T."/>
            <person name="Fouts D.E."/>
            <person name="Ravel J."/>
            <person name="Tettelin H."/>
            <person name="Ren Q."/>
            <person name="Read T.D."/>
            <person name="DeBoy R.T."/>
            <person name="Seshadri R."/>
            <person name="Salzberg S.L."/>
            <person name="Jensen H.B."/>
            <person name="Birkeland N.K."/>
            <person name="Nelson W.C."/>
            <person name="Dodson R.J."/>
            <person name="Grindhaug S.H."/>
            <person name="Holt I.E."/>
            <person name="Eidhammer I."/>
            <person name="Jonasen I."/>
            <person name="Vanaken S."/>
            <person name="Utterback T.R."/>
            <person name="Feldblyum T.V."/>
            <person name="Fraser C.M."/>
            <person name="Lillehaug J.R."/>
            <person name="Eisen J.A."/>
        </authorList>
    </citation>
    <scope>NUCLEOTIDE SEQUENCE [LARGE SCALE GENOMIC DNA]</scope>
    <source>
        <strain>ATCC 33009 / NCIMB 11132 / Bath</strain>
    </source>
</reference>
<reference key="2">
    <citation type="journal article" date="1986" name="Biochem. J.">
        <title>The amino acid sequence of cytochrome c-555 from the methane-oxidizing bacterium Methylococcus capsulatus.</title>
        <authorList>
            <person name="Ambler R.P."/>
            <person name="Dalton H."/>
            <person name="Meyer T.E."/>
            <person name="Bartsch R.G."/>
            <person name="Kamen M.D."/>
        </authorList>
    </citation>
    <scope>PROTEIN SEQUENCE OF 28-123</scope>
    <source>
        <strain>ATCC 33009 / NCIMB 11132 / Bath</strain>
    </source>
</reference>
<reference key="3">
    <citation type="journal article" date="2011" name="PLoS ONE">
        <title>Cytochrome c-554 from Methylosinus trichosporium OB3b; a protein that belongs to the cytochrome c2 family and exhibits a HALS-Type EPR signal.</title>
        <authorList>
            <person name="Harbitz E."/>
            <person name="Andersson K.K."/>
        </authorList>
    </citation>
    <scope>PROTEIN SEQUENCE OF 28-41</scope>
    <scope>MASS SPECTROMETRY</scope>
    <source>
        <strain>ATCC 33009 / NCIMB 11132 / Bath</strain>
    </source>
</reference>
<name>C555_METCA</name>
<evidence type="ECO:0000255" key="1">
    <source>
        <dbReference type="PROSITE-ProRule" id="PRU00433"/>
    </source>
</evidence>
<evidence type="ECO:0000269" key="2">
    <source>
    </source>
</evidence>
<evidence type="ECO:0000269" key="3">
    <source>
    </source>
</evidence>
<accession>P04369</accession>
<accession>Q604C8</accession>